<reference key="1">
    <citation type="journal article" date="2008" name="Foodborne Pathog. Dis.">
        <title>The complete genome sequence and analysis of the human pathogen Campylobacter lari.</title>
        <authorList>
            <person name="Miller W.G."/>
            <person name="Wang G."/>
            <person name="Binnewies T.T."/>
            <person name="Parker C.T."/>
        </authorList>
    </citation>
    <scope>NUCLEOTIDE SEQUENCE [LARGE SCALE GENOMIC DNA]</scope>
    <source>
        <strain>RM2100 / D67 / ATCC BAA-1060</strain>
    </source>
</reference>
<comment type="function">
    <text evidence="1">Catalyzes the complicated ring closure reaction between the two acyclic compounds 1-deoxy-D-xylulose-5-phosphate (DXP) and 3-amino-2-oxopropyl phosphate (1-amino-acetone-3-phosphate or AAP) to form pyridoxine 5'-phosphate (PNP) and inorganic phosphate.</text>
</comment>
<comment type="catalytic activity">
    <reaction evidence="1">
        <text>3-amino-2-oxopropyl phosphate + 1-deoxy-D-xylulose 5-phosphate = pyridoxine 5'-phosphate + phosphate + 2 H2O + H(+)</text>
        <dbReference type="Rhea" id="RHEA:15265"/>
        <dbReference type="ChEBI" id="CHEBI:15377"/>
        <dbReference type="ChEBI" id="CHEBI:15378"/>
        <dbReference type="ChEBI" id="CHEBI:43474"/>
        <dbReference type="ChEBI" id="CHEBI:57279"/>
        <dbReference type="ChEBI" id="CHEBI:57792"/>
        <dbReference type="ChEBI" id="CHEBI:58589"/>
        <dbReference type="EC" id="2.6.99.2"/>
    </reaction>
</comment>
<comment type="pathway">
    <text evidence="1">Cofactor biosynthesis; pyridoxine 5'-phosphate biosynthesis; pyridoxine 5'-phosphate from D-erythrose 4-phosphate: step 5/5.</text>
</comment>
<comment type="subunit">
    <text evidence="1">Homooctamer; tetramer of dimers.</text>
</comment>
<comment type="subcellular location">
    <subcellularLocation>
        <location evidence="1">Cytoplasm</location>
    </subcellularLocation>
</comment>
<comment type="similarity">
    <text evidence="1">Belongs to the PNP synthase family.</text>
</comment>
<dbReference type="EC" id="2.6.99.2" evidence="1"/>
<dbReference type="EMBL" id="CP000932">
    <property type="protein sequence ID" value="ACM64255.1"/>
    <property type="molecule type" value="Genomic_DNA"/>
</dbReference>
<dbReference type="RefSeq" id="WP_012661638.1">
    <property type="nucleotide sequence ID" value="NC_012039.1"/>
</dbReference>
<dbReference type="SMR" id="B9KCG6"/>
<dbReference type="STRING" id="306263.Cla_0931"/>
<dbReference type="KEGG" id="cla:CLA_0931"/>
<dbReference type="PATRIC" id="fig|306263.5.peg.914"/>
<dbReference type="eggNOG" id="COG0854">
    <property type="taxonomic scope" value="Bacteria"/>
</dbReference>
<dbReference type="HOGENOM" id="CLU_074563_0_0_7"/>
<dbReference type="UniPathway" id="UPA00244">
    <property type="reaction ID" value="UER00313"/>
</dbReference>
<dbReference type="Proteomes" id="UP000007727">
    <property type="component" value="Chromosome"/>
</dbReference>
<dbReference type="GO" id="GO:0005829">
    <property type="term" value="C:cytosol"/>
    <property type="evidence" value="ECO:0007669"/>
    <property type="project" value="TreeGrafter"/>
</dbReference>
<dbReference type="GO" id="GO:0033856">
    <property type="term" value="F:pyridoxine 5'-phosphate synthase activity"/>
    <property type="evidence" value="ECO:0007669"/>
    <property type="project" value="UniProtKB-EC"/>
</dbReference>
<dbReference type="GO" id="GO:0008615">
    <property type="term" value="P:pyridoxine biosynthetic process"/>
    <property type="evidence" value="ECO:0007669"/>
    <property type="project" value="UniProtKB-UniRule"/>
</dbReference>
<dbReference type="CDD" id="cd00003">
    <property type="entry name" value="PNPsynthase"/>
    <property type="match status" value="1"/>
</dbReference>
<dbReference type="Gene3D" id="3.20.20.70">
    <property type="entry name" value="Aldolase class I"/>
    <property type="match status" value="1"/>
</dbReference>
<dbReference type="HAMAP" id="MF_00279">
    <property type="entry name" value="PdxJ"/>
    <property type="match status" value="1"/>
</dbReference>
<dbReference type="InterPro" id="IPR013785">
    <property type="entry name" value="Aldolase_TIM"/>
</dbReference>
<dbReference type="InterPro" id="IPR004569">
    <property type="entry name" value="PyrdxlP_synth_PdxJ"/>
</dbReference>
<dbReference type="InterPro" id="IPR036130">
    <property type="entry name" value="Pyridoxine-5'_phos_synth"/>
</dbReference>
<dbReference type="NCBIfam" id="TIGR00559">
    <property type="entry name" value="pdxJ"/>
    <property type="match status" value="1"/>
</dbReference>
<dbReference type="NCBIfam" id="NF003625">
    <property type="entry name" value="PRK05265.1-3"/>
    <property type="match status" value="1"/>
</dbReference>
<dbReference type="NCBIfam" id="NF003627">
    <property type="entry name" value="PRK05265.1-5"/>
    <property type="match status" value="1"/>
</dbReference>
<dbReference type="PANTHER" id="PTHR30456">
    <property type="entry name" value="PYRIDOXINE 5'-PHOSPHATE SYNTHASE"/>
    <property type="match status" value="1"/>
</dbReference>
<dbReference type="PANTHER" id="PTHR30456:SF0">
    <property type="entry name" value="PYRIDOXINE 5'-PHOSPHATE SYNTHASE"/>
    <property type="match status" value="1"/>
</dbReference>
<dbReference type="Pfam" id="PF03740">
    <property type="entry name" value="PdxJ"/>
    <property type="match status" value="1"/>
</dbReference>
<dbReference type="SUPFAM" id="SSF63892">
    <property type="entry name" value="Pyridoxine 5'-phosphate synthase"/>
    <property type="match status" value="1"/>
</dbReference>
<evidence type="ECO:0000255" key="1">
    <source>
        <dbReference type="HAMAP-Rule" id="MF_00279"/>
    </source>
</evidence>
<feature type="chain" id="PRO_1000132546" description="Pyridoxine 5'-phosphate synthase">
    <location>
        <begin position="1"/>
        <end position="255"/>
    </location>
</feature>
<feature type="active site" description="Proton acceptor" evidence="1">
    <location>
        <position position="41"/>
    </location>
</feature>
<feature type="active site" description="Proton acceptor" evidence="1">
    <location>
        <position position="68"/>
    </location>
</feature>
<feature type="active site" description="Proton donor" evidence="1">
    <location>
        <position position="208"/>
    </location>
</feature>
<feature type="binding site" evidence="1">
    <location>
        <position position="6"/>
    </location>
    <ligand>
        <name>3-amino-2-oxopropyl phosphate</name>
        <dbReference type="ChEBI" id="CHEBI:57279"/>
    </ligand>
</feature>
<feature type="binding site" evidence="1">
    <location>
        <begin position="8"/>
        <end position="9"/>
    </location>
    <ligand>
        <name>1-deoxy-D-xylulose 5-phosphate</name>
        <dbReference type="ChEBI" id="CHEBI:57792"/>
    </ligand>
</feature>
<feature type="binding site" evidence="1">
    <location>
        <position position="17"/>
    </location>
    <ligand>
        <name>3-amino-2-oxopropyl phosphate</name>
        <dbReference type="ChEBI" id="CHEBI:57279"/>
    </ligand>
</feature>
<feature type="binding site" evidence="1">
    <location>
        <position position="43"/>
    </location>
    <ligand>
        <name>1-deoxy-D-xylulose 5-phosphate</name>
        <dbReference type="ChEBI" id="CHEBI:57792"/>
    </ligand>
</feature>
<feature type="binding site" evidence="1">
    <location>
        <position position="48"/>
    </location>
    <ligand>
        <name>1-deoxy-D-xylulose 5-phosphate</name>
        <dbReference type="ChEBI" id="CHEBI:57792"/>
    </ligand>
</feature>
<feature type="binding site" evidence="1">
    <location>
        <position position="96"/>
    </location>
    <ligand>
        <name>1-deoxy-D-xylulose 5-phosphate</name>
        <dbReference type="ChEBI" id="CHEBI:57792"/>
    </ligand>
</feature>
<feature type="binding site" evidence="1">
    <location>
        <position position="209"/>
    </location>
    <ligand>
        <name>3-amino-2-oxopropyl phosphate</name>
        <dbReference type="ChEBI" id="CHEBI:57279"/>
    </ligand>
</feature>
<feature type="binding site" evidence="1">
    <location>
        <begin position="230"/>
        <end position="231"/>
    </location>
    <ligand>
        <name>3-amino-2-oxopropyl phosphate</name>
        <dbReference type="ChEBI" id="CHEBI:57279"/>
    </ligand>
</feature>
<feature type="site" description="Transition state stabilizer" evidence="1">
    <location>
        <position position="145"/>
    </location>
</feature>
<accession>B9KCG6</accession>
<keyword id="KW-0963">Cytoplasm</keyword>
<keyword id="KW-0664">Pyridoxine biosynthesis</keyword>
<keyword id="KW-1185">Reference proteome</keyword>
<keyword id="KW-0808">Transferase</keyword>
<gene>
    <name evidence="1" type="primary">pdxJ</name>
    <name type="ordered locus">Cla_0931</name>
</gene>
<sequence>MLLGVNIDHIAVLREARKVNDPDLLEAAFLSANLADQITIHVREDRRHANEKDLENILKYCKCVVNLECSIDMIEYALKYKPSRVTLVPEKRQELTTEGGLNLNNDKLQEVILKLKQEQIEVSLFIDPNLEDIEKSSLLKADFIELHTGLYANIYNALYTNINQTSYALPELILSKNELKKLLENELQRLRQSASLAKSLNLNVAAGHGLNYKNVKNIVDILEIKELNIGQSIVARSVFVGLEKAILEMRALIKR</sequence>
<organism>
    <name type="scientific">Campylobacter lari (strain RM2100 / D67 / ATCC BAA-1060)</name>
    <dbReference type="NCBI Taxonomy" id="306263"/>
    <lineage>
        <taxon>Bacteria</taxon>
        <taxon>Pseudomonadati</taxon>
        <taxon>Campylobacterota</taxon>
        <taxon>Epsilonproteobacteria</taxon>
        <taxon>Campylobacterales</taxon>
        <taxon>Campylobacteraceae</taxon>
        <taxon>Campylobacter</taxon>
    </lineage>
</organism>
<protein>
    <recommendedName>
        <fullName evidence="1">Pyridoxine 5'-phosphate synthase</fullName>
        <shortName evidence="1">PNP synthase</shortName>
        <ecNumber evidence="1">2.6.99.2</ecNumber>
    </recommendedName>
</protein>
<name>PDXJ_CAMLR</name>
<proteinExistence type="inferred from homology"/>